<accession>O94760</accession>
<accession>Q5HYC8</accession>
<accession>Q86XK5</accession>
<protein>
    <recommendedName>
        <fullName evidence="10">N(G),N(G)-dimethylarginine dimethylaminohydrolase 1</fullName>
        <shortName>DDAH-1</shortName>
        <shortName>Dimethylarginine dimethylaminohydrolase 1</shortName>
        <ecNumber evidence="4 5 6 7">3.5.3.18</ecNumber>
    </recommendedName>
    <alternativeName>
        <fullName>DDAHI</fullName>
    </alternativeName>
    <alternativeName>
        <fullName>Dimethylargininase-1</fullName>
    </alternativeName>
</protein>
<keyword id="KW-0002">3D-structure</keyword>
<keyword id="KW-0007">Acetylation</keyword>
<keyword id="KW-0025">Alternative splicing</keyword>
<keyword id="KW-0903">Direct protein sequencing</keyword>
<keyword id="KW-0378">Hydrolase</keyword>
<keyword id="KW-0479">Metal-binding</keyword>
<keyword id="KW-1267">Proteomics identification</keyword>
<keyword id="KW-1185">Reference proteome</keyword>
<keyword id="KW-0702">S-nitrosylation</keyword>
<keyword id="KW-0862">Zinc</keyword>
<feature type="initiator methionine" description="Removed" evidence="8 13">
    <location>
        <position position="1"/>
    </location>
</feature>
<feature type="chain" id="PRO_0000171118" description="N(G),N(G)-dimethylarginine dimethylaminohydrolase 1">
    <location>
        <begin position="2"/>
        <end position="285"/>
    </location>
</feature>
<feature type="active site" description="Proton donor" evidence="11">
    <location>
        <position position="173"/>
    </location>
</feature>
<feature type="active site" description="Nucleophile" evidence="5">
    <location>
        <position position="274"/>
    </location>
</feature>
<feature type="binding site">
    <location>
        <position position="30"/>
    </location>
    <ligand>
        <name>substrate</name>
    </ligand>
</feature>
<feature type="binding site">
    <location>
        <position position="73"/>
    </location>
    <ligand>
        <name>substrate</name>
    </ligand>
</feature>
<feature type="binding site">
    <location>
        <begin position="78"/>
        <end position="79"/>
    </location>
    <ligand>
        <name>substrate</name>
    </ligand>
</feature>
<feature type="binding site">
    <location>
        <position position="98"/>
    </location>
    <ligand>
        <name>substrate</name>
    </ligand>
</feature>
<feature type="binding site">
    <location>
        <position position="145"/>
    </location>
    <ligand>
        <name>substrate</name>
    </ligand>
</feature>
<feature type="binding site">
    <location>
        <position position="268"/>
    </location>
    <ligand>
        <name>substrate</name>
    </ligand>
</feature>
<feature type="binding site" evidence="1">
    <location>
        <position position="274"/>
    </location>
    <ligand>
        <name>Zn(2+)</name>
        <dbReference type="ChEBI" id="CHEBI:29105"/>
    </ligand>
</feature>
<feature type="modified residue" description="N-acetylalanine" evidence="8 13">
    <location>
        <position position="2"/>
    </location>
</feature>
<feature type="modified residue" description="S-nitrosocysteine" evidence="2">
    <location>
        <position position="222"/>
    </location>
</feature>
<feature type="modified residue" description="S-nitrosocysteine" evidence="2">
    <location>
        <position position="274"/>
    </location>
</feature>
<feature type="splice variant" id="VSP_043813" description="In isoform 2." evidence="9">
    <location>
        <begin position="1"/>
        <end position="103"/>
    </location>
</feature>
<feature type="mutagenesis site" description="Reduces enzyme activity and affinity for asymmetric dimethylarginine about 12-fold." evidence="5">
    <original>L</original>
    <variation>A</variation>
    <location>
        <position position="30"/>
    </location>
</feature>
<feature type="mutagenesis site" description="Reduces enzyme activity about 1000-fold, and affinity for asymmetric dimethylarginine about 100-fold." evidence="5">
    <original>E</original>
    <variation>A</variation>
    <location>
        <position position="78"/>
    </location>
</feature>
<feature type="mutagenesis site" description="Reduces enzyme activity about 10-fold, and affinity for asymmetric dimethylarginine about 7-fold." evidence="5">
    <original>L</original>
    <variation>G</variation>
    <location>
        <position position="271"/>
    </location>
</feature>
<feature type="helix" evidence="16">
    <location>
        <begin position="2"/>
        <end position="4"/>
    </location>
</feature>
<feature type="strand" evidence="15">
    <location>
        <begin position="14"/>
        <end position="19"/>
    </location>
</feature>
<feature type="helix" evidence="15">
    <location>
        <begin position="25"/>
        <end position="28"/>
    </location>
</feature>
<feature type="helix" evidence="15">
    <location>
        <begin position="40"/>
        <end position="54"/>
    </location>
</feature>
<feature type="turn" evidence="15">
    <location>
        <begin position="55"/>
        <end position="58"/>
    </location>
</feature>
<feature type="strand" evidence="15">
    <location>
        <begin position="61"/>
        <end position="65"/>
    </location>
</feature>
<feature type="turn" evidence="15">
    <location>
        <begin position="72"/>
        <end position="75"/>
    </location>
</feature>
<feature type="helix" evidence="15">
    <location>
        <begin position="77"/>
        <end position="80"/>
    </location>
</feature>
<feature type="strand" evidence="15">
    <location>
        <begin position="81"/>
        <end position="84"/>
    </location>
</feature>
<feature type="strand" evidence="15">
    <location>
        <begin position="87"/>
        <end position="90"/>
    </location>
</feature>
<feature type="helix" evidence="15">
    <location>
        <begin position="96"/>
        <end position="101"/>
    </location>
</feature>
<feature type="helix" evidence="15">
    <location>
        <begin position="102"/>
        <end position="111"/>
    </location>
</feature>
<feature type="strand" evidence="15">
    <location>
        <begin position="115"/>
        <end position="118"/>
    </location>
</feature>
<feature type="helix" evidence="15">
    <location>
        <begin position="128"/>
        <end position="130"/>
    </location>
</feature>
<feature type="strand" evidence="15">
    <location>
        <begin position="131"/>
        <end position="133"/>
    </location>
</feature>
<feature type="strand" evidence="15">
    <location>
        <begin position="135"/>
        <end position="142"/>
    </location>
</feature>
<feature type="helix" evidence="15">
    <location>
        <begin position="148"/>
        <end position="157"/>
    </location>
</feature>
<feature type="turn" evidence="14">
    <location>
        <begin position="158"/>
        <end position="160"/>
    </location>
</feature>
<feature type="strand" evidence="15">
    <location>
        <begin position="161"/>
        <end position="167"/>
    </location>
</feature>
<feature type="helix" evidence="15">
    <location>
        <begin position="174"/>
        <end position="176"/>
    </location>
</feature>
<feature type="strand" evidence="15">
    <location>
        <begin position="177"/>
        <end position="182"/>
    </location>
</feature>
<feature type="strand" evidence="15">
    <location>
        <begin position="185"/>
        <end position="189"/>
    </location>
</feature>
<feature type="helix" evidence="15">
    <location>
        <begin position="192"/>
        <end position="204"/>
    </location>
</feature>
<feature type="strand" evidence="16">
    <location>
        <begin position="205"/>
        <end position="207"/>
    </location>
</feature>
<feature type="strand" evidence="15">
    <location>
        <begin position="210"/>
        <end position="216"/>
    </location>
</feature>
<feature type="helix" evidence="15">
    <location>
        <begin position="217"/>
        <end position="220"/>
    </location>
</feature>
<feature type="strand" evidence="15">
    <location>
        <begin position="223"/>
        <end position="227"/>
    </location>
</feature>
<feature type="turn" evidence="15">
    <location>
        <begin position="228"/>
        <end position="230"/>
    </location>
</feature>
<feature type="strand" evidence="15">
    <location>
        <begin position="231"/>
        <end position="236"/>
    </location>
</feature>
<feature type="turn" evidence="15">
    <location>
        <begin position="239"/>
        <end position="241"/>
    </location>
</feature>
<feature type="helix" evidence="15">
    <location>
        <begin position="243"/>
        <end position="249"/>
    </location>
</feature>
<feature type="strand" evidence="15">
    <location>
        <begin position="255"/>
        <end position="259"/>
    </location>
</feature>
<feature type="helix" evidence="15">
    <location>
        <begin position="265"/>
        <end position="268"/>
    </location>
</feature>
<feature type="helix" evidence="15">
    <location>
        <begin position="273"/>
        <end position="275"/>
    </location>
</feature>
<feature type="strand" evidence="15">
    <location>
        <begin position="277"/>
        <end position="279"/>
    </location>
</feature>
<gene>
    <name evidence="12" type="primary">DDAH1</name>
    <name type="synonym">DDAH</name>
</gene>
<comment type="function">
    <text evidence="4 5 6 7">Hydrolyzes N(G),N(G)-dimethyl-L-arginine (ADMA) and N(G)-monomethyl-L-arginine (MMA) which act as inhibitors of NOS. Has therefore a role in the regulation of nitric oxide generation.</text>
</comment>
<comment type="catalytic activity">
    <reaction evidence="4 5 6 7">
        <text>N(omega),N(omega)-dimethyl-L-arginine + H2O = dimethylamine + L-citrulline</text>
        <dbReference type="Rhea" id="RHEA:17305"/>
        <dbReference type="ChEBI" id="CHEBI:15377"/>
        <dbReference type="ChEBI" id="CHEBI:57743"/>
        <dbReference type="ChEBI" id="CHEBI:58040"/>
        <dbReference type="ChEBI" id="CHEBI:58326"/>
        <dbReference type="EC" id="3.5.3.18"/>
    </reaction>
    <physiologicalReaction direction="left-to-right" evidence="11">
        <dbReference type="Rhea" id="RHEA:17306"/>
    </physiologicalReaction>
</comment>
<comment type="catalytic activity">
    <reaction evidence="4 5">
        <text>N(omega)-methyl-L-arginine + H2O = L-citrulline + methylamine</text>
        <dbReference type="Rhea" id="RHEA:25173"/>
        <dbReference type="ChEBI" id="CHEBI:15377"/>
        <dbReference type="ChEBI" id="CHEBI:57743"/>
        <dbReference type="ChEBI" id="CHEBI:59338"/>
        <dbReference type="ChEBI" id="CHEBI:114953"/>
        <dbReference type="EC" id="3.5.3.18"/>
    </reaction>
    <physiologicalReaction direction="left-to-right" evidence="11">
        <dbReference type="Rhea" id="RHEA:25174"/>
    </physiologicalReaction>
</comment>
<comment type="activity regulation">
    <text evidence="1 4 5">Inhibited by zinc ions (By similarity). Enzyme purified in the absence of 1,10-phenanthroline contains on average 0.4 zinc atoms per subunit. Inhibited by 4-hydroxy-nonenal through the formation of a covalent adduct with His-173. Competitively inhibited by N(5)-iminopropyl-ornithine.</text>
</comment>
<comment type="biophysicochemical properties">
    <kinetics>
        <KM evidence="4 5">69 uM for asymmetric dimethylarginine (ADMA)</KM>
        <KM evidence="4 5">54 uM for monomethyl-L-arginine (MMA)</KM>
        <KM evidence="4 5">3.1 uM for S-methyl-L-thiocitrulline</KM>
        <Vmax evidence="4 5">356.0 nmol/min/mg enzyme with ADMA</Vmax>
        <Vmax evidence="4 5">154.0 nmol/min/mg enzyme with NMA</Vmax>
    </kinetics>
    <phDependence>
        <text evidence="4 5">Optimum pH is 8.5.</text>
    </phDependence>
</comment>
<comment type="subunit">
    <text evidence="5">Monomer.</text>
</comment>
<comment type="alternative products">
    <event type="alternative splicing"/>
    <isoform>
        <id>O94760-1</id>
        <name>1</name>
        <sequence type="displayed"/>
    </isoform>
    <isoform>
        <id>O94760-2</id>
        <name>2</name>
        <sequence type="described" ref="VSP_043813"/>
    </isoform>
</comment>
<comment type="tissue specificity">
    <text evidence="3">Detected in brain, liver, kidney and pancreas, and at low levels in skeletal muscle.</text>
</comment>
<comment type="similarity">
    <text evidence="10">Belongs to the DDAH family.</text>
</comment>
<organism>
    <name type="scientific">Homo sapiens</name>
    <name type="common">Human</name>
    <dbReference type="NCBI Taxonomy" id="9606"/>
    <lineage>
        <taxon>Eukaryota</taxon>
        <taxon>Metazoa</taxon>
        <taxon>Chordata</taxon>
        <taxon>Craniata</taxon>
        <taxon>Vertebrata</taxon>
        <taxon>Euteleostomi</taxon>
        <taxon>Mammalia</taxon>
        <taxon>Eutheria</taxon>
        <taxon>Euarchontoglires</taxon>
        <taxon>Primates</taxon>
        <taxon>Haplorrhini</taxon>
        <taxon>Catarrhini</taxon>
        <taxon>Hominidae</taxon>
        <taxon>Homo</taxon>
    </lineage>
</organism>
<dbReference type="EC" id="3.5.3.18" evidence="4 5 6 7"/>
<dbReference type="EMBL" id="AB001915">
    <property type="protein sequence ID" value="BAA37117.1"/>
    <property type="molecule type" value="mRNA"/>
</dbReference>
<dbReference type="EMBL" id="BX648145">
    <property type="protein sequence ID" value="CAI45988.1"/>
    <property type="molecule type" value="mRNA"/>
</dbReference>
<dbReference type="EMBL" id="AC092807">
    <property type="status" value="NOT_ANNOTATED_CDS"/>
    <property type="molecule type" value="Genomic_DNA"/>
</dbReference>
<dbReference type="EMBL" id="AL078459">
    <property type="status" value="NOT_ANNOTATED_CDS"/>
    <property type="molecule type" value="Genomic_DNA"/>
</dbReference>
<dbReference type="EMBL" id="AL360219">
    <property type="status" value="NOT_ANNOTATED_CDS"/>
    <property type="molecule type" value="Genomic_DNA"/>
</dbReference>
<dbReference type="EMBL" id="CH471097">
    <property type="protein sequence ID" value="EAW73199.1"/>
    <property type="molecule type" value="Genomic_DNA"/>
</dbReference>
<dbReference type="EMBL" id="BC033680">
    <property type="protein sequence ID" value="AAH33680.1"/>
    <property type="molecule type" value="mRNA"/>
</dbReference>
<dbReference type="EMBL" id="BC043235">
    <property type="protein sequence ID" value="AAH43235.2"/>
    <property type="molecule type" value="mRNA"/>
</dbReference>
<dbReference type="CCDS" id="CCDS44170.1">
    <molecule id="O94760-2"/>
</dbReference>
<dbReference type="CCDS" id="CCDS705.1">
    <molecule id="O94760-1"/>
</dbReference>
<dbReference type="RefSeq" id="NP_001127917.1">
    <molecule id="O94760-2"/>
    <property type="nucleotide sequence ID" value="NM_001134445.2"/>
</dbReference>
<dbReference type="RefSeq" id="NP_036269.1">
    <molecule id="O94760-1"/>
    <property type="nucleotide sequence ID" value="NM_012137.4"/>
</dbReference>
<dbReference type="RefSeq" id="XP_005270767.1">
    <molecule id="O94760-2"/>
    <property type="nucleotide sequence ID" value="XM_005270710.3"/>
</dbReference>
<dbReference type="PDB" id="2JAI">
    <property type="method" value="X-ray"/>
    <property type="resolution" value="2.30 A"/>
    <property type="chains" value="A/B=1-285"/>
</dbReference>
<dbReference type="PDB" id="2JAJ">
    <property type="method" value="X-ray"/>
    <property type="resolution" value="2.00 A"/>
    <property type="chains" value="A/B=1-285"/>
</dbReference>
<dbReference type="PDB" id="3I2E">
    <property type="method" value="X-ray"/>
    <property type="resolution" value="2.03 A"/>
    <property type="chains" value="A/B=1-285"/>
</dbReference>
<dbReference type="PDB" id="3I4A">
    <property type="method" value="X-ray"/>
    <property type="resolution" value="1.90 A"/>
    <property type="chains" value="A/B=1-285"/>
</dbReference>
<dbReference type="PDB" id="3P8E">
    <property type="method" value="X-ray"/>
    <property type="resolution" value="2.49 A"/>
    <property type="chains" value="A/B=1-285"/>
</dbReference>
<dbReference type="PDB" id="3P8P">
    <property type="method" value="X-ray"/>
    <property type="resolution" value="2.50 A"/>
    <property type="chains" value="A/B=1-285"/>
</dbReference>
<dbReference type="PDB" id="6DGE">
    <property type="method" value="X-ray"/>
    <property type="resolution" value="1.91 A"/>
    <property type="chains" value="A=1-285"/>
</dbReference>
<dbReference type="PDB" id="6SZP">
    <property type="method" value="X-ray"/>
    <property type="resolution" value="1.76 A"/>
    <property type="chains" value="A=1-285"/>
</dbReference>
<dbReference type="PDB" id="6SZQ">
    <property type="method" value="X-ray"/>
    <property type="resolution" value="2.41 A"/>
    <property type="chains" value="A/B/C/D/E/F=1-285"/>
</dbReference>
<dbReference type="PDB" id="7ULU">
    <property type="method" value="X-ray"/>
    <property type="resolution" value="2.20 A"/>
    <property type="chains" value="A/B=1-285"/>
</dbReference>
<dbReference type="PDB" id="7ULV">
    <property type="method" value="X-ray"/>
    <property type="resolution" value="2.37 A"/>
    <property type="chains" value="A/B/C/D/E/F=1-285"/>
</dbReference>
<dbReference type="PDB" id="7ULX">
    <property type="method" value="X-ray"/>
    <property type="resolution" value="1.71 A"/>
    <property type="chains" value="A/B=1-285"/>
</dbReference>
<dbReference type="PDB" id="7USZ">
    <property type="method" value="X-ray"/>
    <property type="resolution" value="1.65 A"/>
    <property type="chains" value="A/B=2-285"/>
</dbReference>
<dbReference type="PDB" id="7UT0">
    <property type="method" value="X-ray"/>
    <property type="resolution" value="1.68 A"/>
    <property type="chains" value="A/B=2-285"/>
</dbReference>
<dbReference type="PDBsum" id="2JAI"/>
<dbReference type="PDBsum" id="2JAJ"/>
<dbReference type="PDBsum" id="3I2E"/>
<dbReference type="PDBsum" id="3I4A"/>
<dbReference type="PDBsum" id="3P8E"/>
<dbReference type="PDBsum" id="3P8P"/>
<dbReference type="PDBsum" id="6DGE"/>
<dbReference type="PDBsum" id="6SZP"/>
<dbReference type="PDBsum" id="6SZQ"/>
<dbReference type="PDBsum" id="7ULU"/>
<dbReference type="PDBsum" id="7ULV"/>
<dbReference type="PDBsum" id="7ULX"/>
<dbReference type="PDBsum" id="7USZ"/>
<dbReference type="PDBsum" id="7UT0"/>
<dbReference type="SMR" id="O94760"/>
<dbReference type="BioGRID" id="117114">
    <property type="interactions" value="51"/>
</dbReference>
<dbReference type="DIP" id="DIP-61582N"/>
<dbReference type="FunCoup" id="O94760">
    <property type="interactions" value="180"/>
</dbReference>
<dbReference type="IntAct" id="O94760">
    <property type="interactions" value="21"/>
</dbReference>
<dbReference type="STRING" id="9606.ENSP00000284031"/>
<dbReference type="BindingDB" id="O94760"/>
<dbReference type="ChEMBL" id="CHEMBL6036"/>
<dbReference type="DrugBank" id="DB00155">
    <property type="generic name" value="Citrulline"/>
</dbReference>
<dbReference type="DrugBank" id="DB05351">
    <property type="generic name" value="Dexlansoprazole"/>
</dbReference>
<dbReference type="DrugBank" id="DB00736">
    <property type="generic name" value="Esomeprazole"/>
</dbReference>
<dbReference type="DrugBank" id="DB00213">
    <property type="generic name" value="Pantoprazole"/>
</dbReference>
<dbReference type="DrugCentral" id="O94760"/>
<dbReference type="GuidetoPHARMACOLOGY" id="1247"/>
<dbReference type="GlyGen" id="O94760">
    <property type="glycosylation" value="1 site, 1 O-linked glycan (1 site)"/>
</dbReference>
<dbReference type="iPTMnet" id="O94760"/>
<dbReference type="PhosphoSitePlus" id="O94760"/>
<dbReference type="SwissPalm" id="O94760"/>
<dbReference type="BioMuta" id="DDAH1"/>
<dbReference type="REPRODUCTION-2DPAGE" id="IPI00220342"/>
<dbReference type="jPOST" id="O94760"/>
<dbReference type="MassIVE" id="O94760"/>
<dbReference type="PaxDb" id="9606-ENSP00000284031"/>
<dbReference type="PeptideAtlas" id="O94760"/>
<dbReference type="ProteomicsDB" id="50422">
    <molecule id="O94760-1"/>
</dbReference>
<dbReference type="ProteomicsDB" id="50423">
    <molecule id="O94760-2"/>
</dbReference>
<dbReference type="Pumba" id="O94760"/>
<dbReference type="Antibodypedia" id="1588">
    <property type="antibodies" value="308 antibodies from 35 providers"/>
</dbReference>
<dbReference type="DNASU" id="23576"/>
<dbReference type="Ensembl" id="ENST00000284031.13">
    <molecule id="O94760-1"/>
    <property type="protein sequence ID" value="ENSP00000284031.8"/>
    <property type="gene ID" value="ENSG00000153904.21"/>
</dbReference>
<dbReference type="Ensembl" id="ENST00000426972.8">
    <molecule id="O94760-2"/>
    <property type="protein sequence ID" value="ENSP00000411189.4"/>
    <property type="gene ID" value="ENSG00000153904.21"/>
</dbReference>
<dbReference type="GeneID" id="23576"/>
<dbReference type="KEGG" id="hsa:23576"/>
<dbReference type="MANE-Select" id="ENST00000284031.13">
    <property type="protein sequence ID" value="ENSP00000284031.8"/>
    <property type="RefSeq nucleotide sequence ID" value="NM_012137.4"/>
    <property type="RefSeq protein sequence ID" value="NP_036269.1"/>
</dbReference>
<dbReference type="UCSC" id="uc001dlb.4">
    <molecule id="O94760-1"/>
    <property type="organism name" value="human"/>
</dbReference>
<dbReference type="AGR" id="HGNC:2715"/>
<dbReference type="CTD" id="23576"/>
<dbReference type="DisGeNET" id="23576"/>
<dbReference type="GeneCards" id="DDAH1"/>
<dbReference type="HGNC" id="HGNC:2715">
    <property type="gene designation" value="DDAH1"/>
</dbReference>
<dbReference type="HPA" id="ENSG00000153904">
    <property type="expression patterns" value="Tissue enhanced (kidney)"/>
</dbReference>
<dbReference type="MIM" id="604743">
    <property type="type" value="gene"/>
</dbReference>
<dbReference type="neXtProt" id="NX_O94760"/>
<dbReference type="OpenTargets" id="ENSG00000153904"/>
<dbReference type="PharmGKB" id="PA27185"/>
<dbReference type="VEuPathDB" id="HostDB:ENSG00000153904"/>
<dbReference type="eggNOG" id="ENOG502QWPA">
    <property type="taxonomic scope" value="Eukaryota"/>
</dbReference>
<dbReference type="GeneTree" id="ENSGT00940000157892"/>
<dbReference type="HOGENOM" id="CLU_115111_0_0_1"/>
<dbReference type="InParanoid" id="O94760"/>
<dbReference type="OMA" id="GRCSHAV"/>
<dbReference type="OrthoDB" id="10016839at2759"/>
<dbReference type="PAN-GO" id="O94760">
    <property type="GO annotations" value="5 GO annotations based on evolutionary models"/>
</dbReference>
<dbReference type="PhylomeDB" id="O94760"/>
<dbReference type="TreeFam" id="TF314737"/>
<dbReference type="BioCyc" id="MetaCyc:HS00016-MONOMER"/>
<dbReference type="BRENDA" id="3.5.3.18">
    <property type="organism ID" value="2681"/>
</dbReference>
<dbReference type="PathwayCommons" id="O94760"/>
<dbReference type="Reactome" id="R-HSA-203615">
    <property type="pathway name" value="eNOS activation"/>
</dbReference>
<dbReference type="SignaLink" id="O94760"/>
<dbReference type="BioGRID-ORCS" id="23576">
    <property type="hits" value="17 hits in 1152 CRISPR screens"/>
</dbReference>
<dbReference type="CD-CODE" id="FB4E32DD">
    <property type="entry name" value="Presynaptic clusters and postsynaptic densities"/>
</dbReference>
<dbReference type="ChiTaRS" id="DDAH1">
    <property type="organism name" value="human"/>
</dbReference>
<dbReference type="EvolutionaryTrace" id="O94760"/>
<dbReference type="GenomeRNAi" id="23576"/>
<dbReference type="Pharos" id="O94760">
    <property type="development level" value="Tchem"/>
</dbReference>
<dbReference type="PRO" id="PR:O94760"/>
<dbReference type="Proteomes" id="UP000005640">
    <property type="component" value="Chromosome 1"/>
</dbReference>
<dbReference type="RNAct" id="O94760">
    <property type="molecule type" value="protein"/>
</dbReference>
<dbReference type="Bgee" id="ENSG00000153904">
    <property type="expression patterns" value="Expressed in endothelial cell and 207 other cell types or tissues"/>
</dbReference>
<dbReference type="ExpressionAtlas" id="O94760">
    <property type="expression patterns" value="baseline and differential"/>
</dbReference>
<dbReference type="GO" id="GO:0005829">
    <property type="term" value="C:cytosol"/>
    <property type="evidence" value="ECO:0000304"/>
    <property type="project" value="Reactome"/>
</dbReference>
<dbReference type="GO" id="GO:0070062">
    <property type="term" value="C:extracellular exosome"/>
    <property type="evidence" value="ECO:0007005"/>
    <property type="project" value="UniProtKB"/>
</dbReference>
<dbReference type="GO" id="GO:0016597">
    <property type="term" value="F:amino acid binding"/>
    <property type="evidence" value="ECO:0000318"/>
    <property type="project" value="GO_Central"/>
</dbReference>
<dbReference type="GO" id="GO:0003824">
    <property type="term" value="F:catalytic activity"/>
    <property type="evidence" value="ECO:0000304"/>
    <property type="project" value="ProtInc"/>
</dbReference>
<dbReference type="GO" id="GO:0016403">
    <property type="term" value="F:dimethylargininase activity"/>
    <property type="evidence" value="ECO:0000314"/>
    <property type="project" value="UniProtKB"/>
</dbReference>
<dbReference type="GO" id="GO:0046872">
    <property type="term" value="F:metal ion binding"/>
    <property type="evidence" value="ECO:0007669"/>
    <property type="project" value="UniProtKB-KW"/>
</dbReference>
<dbReference type="GO" id="GO:0006527">
    <property type="term" value="P:arginine catabolic process"/>
    <property type="evidence" value="ECO:0000314"/>
    <property type="project" value="BHF-UCL"/>
</dbReference>
<dbReference type="GO" id="GO:0006525">
    <property type="term" value="P:arginine metabolic process"/>
    <property type="evidence" value="ECO:0000318"/>
    <property type="project" value="GO_Central"/>
</dbReference>
<dbReference type="GO" id="GO:0000052">
    <property type="term" value="P:citrulline metabolic process"/>
    <property type="evidence" value="ECO:0000314"/>
    <property type="project" value="UniProtKB"/>
</dbReference>
<dbReference type="GO" id="GO:0008285">
    <property type="term" value="P:negative regulation of cell population proliferation"/>
    <property type="evidence" value="ECO:0000314"/>
    <property type="project" value="BHF-UCL"/>
</dbReference>
<dbReference type="GO" id="GO:1900038">
    <property type="term" value="P:negative regulation of cellular response to hypoxia"/>
    <property type="evidence" value="ECO:0000314"/>
    <property type="project" value="BHF-UCL"/>
</dbReference>
<dbReference type="GO" id="GO:0043116">
    <property type="term" value="P:negative regulation of vascular permeability"/>
    <property type="evidence" value="ECO:0000314"/>
    <property type="project" value="BHF-UCL"/>
</dbReference>
<dbReference type="GO" id="GO:0007263">
    <property type="term" value="P:nitric oxide mediated signal transduction"/>
    <property type="evidence" value="ECO:0000304"/>
    <property type="project" value="ProtInc"/>
</dbReference>
<dbReference type="GO" id="GO:0046209">
    <property type="term" value="P:nitric oxide metabolic process"/>
    <property type="evidence" value="ECO:0000304"/>
    <property type="project" value="Reactome"/>
</dbReference>
<dbReference type="GO" id="GO:0045766">
    <property type="term" value="P:positive regulation of angiogenesis"/>
    <property type="evidence" value="ECO:0007669"/>
    <property type="project" value="Ensembl"/>
</dbReference>
<dbReference type="GO" id="GO:0045429">
    <property type="term" value="P:positive regulation of nitric oxide biosynthetic process"/>
    <property type="evidence" value="ECO:0000250"/>
    <property type="project" value="BHF-UCL"/>
</dbReference>
<dbReference type="GO" id="GO:0003073">
    <property type="term" value="P:regulation of systemic arterial blood pressure"/>
    <property type="evidence" value="ECO:0000250"/>
    <property type="project" value="BHF-UCL"/>
</dbReference>
<dbReference type="FunFam" id="3.75.10.10:FF:000004">
    <property type="entry name" value="N(G),N(G)-dimethylarginine dimethylaminohydrolase 1"/>
    <property type="match status" value="1"/>
</dbReference>
<dbReference type="Gene3D" id="3.75.10.10">
    <property type="entry name" value="L-arginine/glycine Amidinotransferase, Chain A"/>
    <property type="match status" value="1"/>
</dbReference>
<dbReference type="InterPro" id="IPR033199">
    <property type="entry name" value="DDAH-like"/>
</dbReference>
<dbReference type="PANTHER" id="PTHR12737">
    <property type="entry name" value="DIMETHYLARGININE DIMETHYLAMINOHYDROLASE"/>
    <property type="match status" value="1"/>
</dbReference>
<dbReference type="PANTHER" id="PTHR12737:SF17">
    <property type="entry name" value="N(G),N(G)-DIMETHYLARGININE DIMETHYLAMINOHYDROLASE 1"/>
    <property type="match status" value="1"/>
</dbReference>
<dbReference type="Pfam" id="PF19420">
    <property type="entry name" value="DDAH_eukar"/>
    <property type="match status" value="1"/>
</dbReference>
<dbReference type="SUPFAM" id="SSF55909">
    <property type="entry name" value="Pentein"/>
    <property type="match status" value="1"/>
</dbReference>
<name>DDAH1_HUMAN</name>
<sequence length="285" mass="31122">MAGLGHPAAFGRATHAVVRALPESLGQHALRSAKGEEVDVARAERQHQLYVGVLGSKLGLQVVELPADESLPDCVFVEDVAVVCEETALITRPGAPSRRKEVDMMKEALEKLQLNIVEMKDENATLDGGDVLFTGREFFVGLSKRTNQRGAEILADTFKDYAVSTVPVADGLHLKSFCSMAGPNLIAIGSSESAQKALKIMQQMSDHRYDKLTVPDDIAANCIYLNIPNKGHVLLHRTPEEYPESAKVYEKLKDHMLIPVSMSELEKVDGLLTCCSVLINKKVDS</sequence>
<evidence type="ECO:0000250" key="1"/>
<evidence type="ECO:0000250" key="2">
    <source>
        <dbReference type="UniProtKB" id="P56965"/>
    </source>
</evidence>
<evidence type="ECO:0000269" key="3">
    <source>
    </source>
</evidence>
<evidence type="ECO:0000269" key="4">
    <source>
    </source>
</evidence>
<evidence type="ECO:0000269" key="5">
    <source>
    </source>
</evidence>
<evidence type="ECO:0000269" key="6">
    <source>
    </source>
</evidence>
<evidence type="ECO:0000269" key="7">
    <source>
    </source>
</evidence>
<evidence type="ECO:0000269" key="8">
    <source>
    </source>
</evidence>
<evidence type="ECO:0000303" key="9">
    <source>
    </source>
</evidence>
<evidence type="ECO:0000305" key="10"/>
<evidence type="ECO:0000305" key="11">
    <source>
    </source>
</evidence>
<evidence type="ECO:0000312" key="12">
    <source>
        <dbReference type="HGNC" id="HGNC:2715"/>
    </source>
</evidence>
<evidence type="ECO:0007744" key="13">
    <source>
    </source>
</evidence>
<evidence type="ECO:0007829" key="14">
    <source>
        <dbReference type="PDB" id="6SZP"/>
    </source>
</evidence>
<evidence type="ECO:0007829" key="15">
    <source>
        <dbReference type="PDB" id="7USZ"/>
    </source>
</evidence>
<evidence type="ECO:0007829" key="16">
    <source>
        <dbReference type="PDB" id="7UT0"/>
    </source>
</evidence>
<proteinExistence type="evidence at protein level"/>
<reference key="1">
    <citation type="journal article" date="1998" name="Eur. J. Biochem.">
        <title>Purification, cDNA cloning and expression of human NG,NG-dimethylarginine dimethylaminohydrolase.</title>
        <authorList>
            <person name="Kimoto M."/>
            <person name="Miyatake S."/>
            <person name="Sasagawa T."/>
            <person name="Yamashita H."/>
            <person name="Okita M."/>
            <person name="Oka T."/>
            <person name="Ogawa T."/>
            <person name="Tsuji H."/>
        </authorList>
    </citation>
    <scope>NUCLEOTIDE SEQUENCE [MRNA] (ISOFORM 1)</scope>
    <scope>PROTEIN SEQUENCE OF 2-12 AND 35-50</scope>
    <scope>ABSENCE OF BOUND ZINC</scope>
    <scope>ACETYLATION AT ALA-2</scope>
    <source>
        <tissue>Kidney</tissue>
        <tissue>Liver</tissue>
    </source>
</reference>
<reference key="2">
    <citation type="journal article" date="1999" name="Biochem. J.">
        <title>Identification of two human dimethylarginine dimethylaminohydrolases with distinct tissue distributions and homology with microbial arginine deiminases.</title>
        <authorList>
            <person name="Leiper J.M."/>
            <person name="Santa Maria J."/>
            <person name="Chubb A."/>
            <person name="MacAllister R.J."/>
            <person name="Charles I.G."/>
            <person name="Whitley G.S."/>
            <person name="Vallance P."/>
        </authorList>
    </citation>
    <scope>NUCLEOTIDE SEQUENCE [MRNA] (ISOFORM 1)</scope>
    <scope>TISSUE SPECIFICITY</scope>
</reference>
<reference key="3">
    <citation type="journal article" date="2007" name="BMC Genomics">
        <title>The full-ORF clone resource of the German cDNA consortium.</title>
        <authorList>
            <person name="Bechtel S."/>
            <person name="Rosenfelder H."/>
            <person name="Duda A."/>
            <person name="Schmidt C.P."/>
            <person name="Ernst U."/>
            <person name="Wellenreuther R."/>
            <person name="Mehrle A."/>
            <person name="Schuster C."/>
            <person name="Bahr A."/>
            <person name="Bloecker H."/>
            <person name="Heubner D."/>
            <person name="Hoerlein A."/>
            <person name="Michel G."/>
            <person name="Wedler H."/>
            <person name="Koehrer K."/>
            <person name="Ottenwaelder B."/>
            <person name="Poustka A."/>
            <person name="Wiemann S."/>
            <person name="Schupp I."/>
        </authorList>
    </citation>
    <scope>NUCLEOTIDE SEQUENCE [LARGE SCALE MRNA] (ISOFORM 2)</scope>
    <source>
        <tissue>Endometrial cancer</tissue>
    </source>
</reference>
<reference key="4">
    <citation type="journal article" date="2006" name="Nature">
        <title>The DNA sequence and biological annotation of human chromosome 1.</title>
        <authorList>
            <person name="Gregory S.G."/>
            <person name="Barlow K.F."/>
            <person name="McLay K.E."/>
            <person name="Kaul R."/>
            <person name="Swarbreck D."/>
            <person name="Dunham A."/>
            <person name="Scott C.E."/>
            <person name="Howe K.L."/>
            <person name="Woodfine K."/>
            <person name="Spencer C.C.A."/>
            <person name="Jones M.C."/>
            <person name="Gillson C."/>
            <person name="Searle S."/>
            <person name="Zhou Y."/>
            <person name="Kokocinski F."/>
            <person name="McDonald L."/>
            <person name="Evans R."/>
            <person name="Phillips K."/>
            <person name="Atkinson A."/>
            <person name="Cooper R."/>
            <person name="Jones C."/>
            <person name="Hall R.E."/>
            <person name="Andrews T.D."/>
            <person name="Lloyd C."/>
            <person name="Ainscough R."/>
            <person name="Almeida J.P."/>
            <person name="Ambrose K.D."/>
            <person name="Anderson F."/>
            <person name="Andrew R.W."/>
            <person name="Ashwell R.I.S."/>
            <person name="Aubin K."/>
            <person name="Babbage A.K."/>
            <person name="Bagguley C.L."/>
            <person name="Bailey J."/>
            <person name="Beasley H."/>
            <person name="Bethel G."/>
            <person name="Bird C.P."/>
            <person name="Bray-Allen S."/>
            <person name="Brown J.Y."/>
            <person name="Brown A.J."/>
            <person name="Buckley D."/>
            <person name="Burton J."/>
            <person name="Bye J."/>
            <person name="Carder C."/>
            <person name="Chapman J.C."/>
            <person name="Clark S.Y."/>
            <person name="Clarke G."/>
            <person name="Clee C."/>
            <person name="Cobley V."/>
            <person name="Collier R.E."/>
            <person name="Corby N."/>
            <person name="Coville G.J."/>
            <person name="Davies J."/>
            <person name="Deadman R."/>
            <person name="Dunn M."/>
            <person name="Earthrowl M."/>
            <person name="Ellington A.G."/>
            <person name="Errington H."/>
            <person name="Frankish A."/>
            <person name="Frankland J."/>
            <person name="French L."/>
            <person name="Garner P."/>
            <person name="Garnett J."/>
            <person name="Gay L."/>
            <person name="Ghori M.R.J."/>
            <person name="Gibson R."/>
            <person name="Gilby L.M."/>
            <person name="Gillett W."/>
            <person name="Glithero R.J."/>
            <person name="Grafham D.V."/>
            <person name="Griffiths C."/>
            <person name="Griffiths-Jones S."/>
            <person name="Grocock R."/>
            <person name="Hammond S."/>
            <person name="Harrison E.S.I."/>
            <person name="Hart E."/>
            <person name="Haugen E."/>
            <person name="Heath P.D."/>
            <person name="Holmes S."/>
            <person name="Holt K."/>
            <person name="Howden P.J."/>
            <person name="Hunt A.R."/>
            <person name="Hunt S.E."/>
            <person name="Hunter G."/>
            <person name="Isherwood J."/>
            <person name="James R."/>
            <person name="Johnson C."/>
            <person name="Johnson D."/>
            <person name="Joy A."/>
            <person name="Kay M."/>
            <person name="Kershaw J.K."/>
            <person name="Kibukawa M."/>
            <person name="Kimberley A.M."/>
            <person name="King A."/>
            <person name="Knights A.J."/>
            <person name="Lad H."/>
            <person name="Laird G."/>
            <person name="Lawlor S."/>
            <person name="Leongamornlert D.A."/>
            <person name="Lloyd D.M."/>
            <person name="Loveland J."/>
            <person name="Lovell J."/>
            <person name="Lush M.J."/>
            <person name="Lyne R."/>
            <person name="Martin S."/>
            <person name="Mashreghi-Mohammadi M."/>
            <person name="Matthews L."/>
            <person name="Matthews N.S.W."/>
            <person name="McLaren S."/>
            <person name="Milne S."/>
            <person name="Mistry S."/>
            <person name="Moore M.J.F."/>
            <person name="Nickerson T."/>
            <person name="O'Dell C.N."/>
            <person name="Oliver K."/>
            <person name="Palmeiri A."/>
            <person name="Palmer S.A."/>
            <person name="Parker A."/>
            <person name="Patel D."/>
            <person name="Pearce A.V."/>
            <person name="Peck A.I."/>
            <person name="Pelan S."/>
            <person name="Phelps K."/>
            <person name="Phillimore B.J."/>
            <person name="Plumb R."/>
            <person name="Rajan J."/>
            <person name="Raymond C."/>
            <person name="Rouse G."/>
            <person name="Saenphimmachak C."/>
            <person name="Sehra H.K."/>
            <person name="Sheridan E."/>
            <person name="Shownkeen R."/>
            <person name="Sims S."/>
            <person name="Skuce C.D."/>
            <person name="Smith M."/>
            <person name="Steward C."/>
            <person name="Subramanian S."/>
            <person name="Sycamore N."/>
            <person name="Tracey A."/>
            <person name="Tromans A."/>
            <person name="Van Helmond Z."/>
            <person name="Wall M."/>
            <person name="Wallis J.M."/>
            <person name="White S."/>
            <person name="Whitehead S.L."/>
            <person name="Wilkinson J.E."/>
            <person name="Willey D.L."/>
            <person name="Williams H."/>
            <person name="Wilming L."/>
            <person name="Wray P.W."/>
            <person name="Wu Z."/>
            <person name="Coulson A."/>
            <person name="Vaudin M."/>
            <person name="Sulston J.E."/>
            <person name="Durbin R.M."/>
            <person name="Hubbard T."/>
            <person name="Wooster R."/>
            <person name="Dunham I."/>
            <person name="Carter N.P."/>
            <person name="McVean G."/>
            <person name="Ross M.T."/>
            <person name="Harrow J."/>
            <person name="Olson M.V."/>
            <person name="Beck S."/>
            <person name="Rogers J."/>
            <person name="Bentley D.R."/>
        </authorList>
    </citation>
    <scope>NUCLEOTIDE SEQUENCE [LARGE SCALE GENOMIC DNA]</scope>
</reference>
<reference key="5">
    <citation type="submission" date="2005-09" db="EMBL/GenBank/DDBJ databases">
        <authorList>
            <person name="Mural R.J."/>
            <person name="Istrail S."/>
            <person name="Sutton G."/>
            <person name="Florea L."/>
            <person name="Halpern A.L."/>
            <person name="Mobarry C.M."/>
            <person name="Lippert R."/>
            <person name="Walenz B."/>
            <person name="Shatkay H."/>
            <person name="Dew I."/>
            <person name="Miller J.R."/>
            <person name="Flanigan M.J."/>
            <person name="Edwards N.J."/>
            <person name="Bolanos R."/>
            <person name="Fasulo D."/>
            <person name="Halldorsson B.V."/>
            <person name="Hannenhalli S."/>
            <person name="Turner R."/>
            <person name="Yooseph S."/>
            <person name="Lu F."/>
            <person name="Nusskern D.R."/>
            <person name="Shue B.C."/>
            <person name="Zheng X.H."/>
            <person name="Zhong F."/>
            <person name="Delcher A.L."/>
            <person name="Huson D.H."/>
            <person name="Kravitz S.A."/>
            <person name="Mouchard L."/>
            <person name="Reinert K."/>
            <person name="Remington K.A."/>
            <person name="Clark A.G."/>
            <person name="Waterman M.S."/>
            <person name="Eichler E.E."/>
            <person name="Adams M.D."/>
            <person name="Hunkapiller M.W."/>
            <person name="Myers E.W."/>
            <person name="Venter J.C."/>
        </authorList>
    </citation>
    <scope>NUCLEOTIDE SEQUENCE [LARGE SCALE GENOMIC DNA]</scope>
</reference>
<reference key="6">
    <citation type="journal article" date="2004" name="Genome Res.">
        <title>The status, quality, and expansion of the NIH full-length cDNA project: the Mammalian Gene Collection (MGC).</title>
        <authorList>
            <consortium name="The MGC Project Team"/>
        </authorList>
    </citation>
    <scope>NUCLEOTIDE SEQUENCE [LARGE SCALE MRNA] (ISOFORM 1)</scope>
    <source>
        <tissue>Colon</tissue>
        <tissue>Kidney</tissue>
        <tissue>Stomach</tissue>
        <tissue>Testis</tissue>
    </source>
</reference>
<reference key="7">
    <citation type="submission" date="2008-12" db="UniProtKB">
        <authorList>
            <person name="Lubec G."/>
            <person name="Vishwanath V."/>
            <person name="Chen W.-Q."/>
            <person name="Sun Y."/>
        </authorList>
    </citation>
    <scope>PROTEIN SEQUENCE OF 20-31; 46-57; 112-136; 150-196; 212-230 AND 268-281</scope>
    <scope>IDENTIFICATION BY MASS SPECTROMETRY</scope>
    <source>
        <tissue>Brain</tissue>
        <tissue>Cajal-Retzius cell</tissue>
        <tissue>Fetal brain cortex</tissue>
    </source>
</reference>
<reference key="8">
    <citation type="journal article" date="2008" name="Biochemistry">
        <title>Mechanism of 4-HNE mediated inhibition of hDDAH-1: implications in NO regulation.</title>
        <authorList>
            <person name="Forbes S.P."/>
            <person name="Druhan L.J."/>
            <person name="Guzman J.E."/>
            <person name="Parinandi N."/>
            <person name="Zhang L."/>
            <person name="Green-Church K.B."/>
            <person name="Cardounel A.J."/>
        </authorList>
    </citation>
    <scope>CATALYTIC ACTIVITY</scope>
    <scope>ACTIVITY REGULATION</scope>
    <scope>IDENTIFICATION BY MASS SPECTROMETRY</scope>
    <scope>BIOPHYSICOCHEMICAL PROPERTIES</scope>
    <scope>FUNCTION</scope>
</reference>
<reference key="9">
    <citation type="journal article" date="2009" name="Anal. Chem.">
        <title>Lys-N and trypsin cover complementary parts of the phosphoproteome in a refined SCX-based approach.</title>
        <authorList>
            <person name="Gauci S."/>
            <person name="Helbig A.O."/>
            <person name="Slijper M."/>
            <person name="Krijgsveld J."/>
            <person name="Heck A.J."/>
            <person name="Mohammed S."/>
        </authorList>
    </citation>
    <scope>ACETYLATION [LARGE SCALE ANALYSIS] AT ALA-2</scope>
    <scope>CLEAVAGE OF INITIATOR METHIONINE [LARGE SCALE ANALYSIS]</scope>
    <scope>IDENTIFICATION BY MASS SPECTROMETRY [LARGE SCALE ANALYSIS]</scope>
</reference>
<reference key="10">
    <citation type="journal article" date="2011" name="Arterioscler. Thromb. Vasc. Biol.">
        <title>Dimethylarginine dimethylaminohydrolase-1 is the critical enzyme for degrading the cardiovascular risk factor asymmetrical dimethylarginine.</title>
        <authorList>
            <person name="Hu X."/>
            <person name="Atzler D."/>
            <person name="Xu X."/>
            <person name="Zhang P."/>
            <person name="Guo H."/>
            <person name="Lu Z."/>
            <person name="Fassett J."/>
            <person name="Schwedhelm E."/>
            <person name="Boeger R.H."/>
            <person name="Bache R.J."/>
            <person name="Chen Y."/>
        </authorList>
    </citation>
    <scope>FUNCTION</scope>
    <scope>CATALYTIC ACTIVITY</scope>
</reference>
<reference key="11">
    <citation type="journal article" date="2011" name="BMC Syst. Biol.">
        <title>Initial characterization of the human central proteome.</title>
        <authorList>
            <person name="Burkard T.R."/>
            <person name="Planyavsky M."/>
            <person name="Kaupe I."/>
            <person name="Breitwieser F.P."/>
            <person name="Buerckstuemmer T."/>
            <person name="Bennett K.L."/>
            <person name="Superti-Furga G."/>
            <person name="Colinge J."/>
        </authorList>
    </citation>
    <scope>IDENTIFICATION BY MASS SPECTROMETRY [LARGE SCALE ANALYSIS]</scope>
</reference>
<reference key="12">
    <citation type="journal article" date="2014" name="J. Proteomics">
        <title>An enzyme assisted RP-RPLC approach for in-depth analysis of human liver phosphoproteome.</title>
        <authorList>
            <person name="Bian Y."/>
            <person name="Song C."/>
            <person name="Cheng K."/>
            <person name="Dong M."/>
            <person name="Wang F."/>
            <person name="Huang J."/>
            <person name="Sun D."/>
            <person name="Wang L."/>
            <person name="Ye M."/>
            <person name="Zou H."/>
        </authorList>
    </citation>
    <scope>IDENTIFICATION BY MASS SPECTROMETRY [LARGE SCALE ANALYSIS]</scope>
    <source>
        <tissue>Liver</tissue>
    </source>
</reference>
<reference key="13">
    <citation type="journal article" date="2023" name="Nat. Commun.">
        <title>A multicentric consortium study demonstrates that dimethylarginine dimethylaminohydrolase 2 is not a dimethylarginine dimethylaminohydrolase.</title>
        <authorList>
            <person name="Ragavan V.N."/>
            <person name="Nair P.C."/>
            <person name="Jarzebska N."/>
            <person name="Angom R.S."/>
            <person name="Ruta L."/>
            <person name="Bianconi E."/>
            <person name="Grottelli S."/>
            <person name="Tararova N.D."/>
            <person name="Ryazanskiy D."/>
            <person name="Lentz S.R."/>
            <person name="Tommasi S."/>
            <person name="Martens-Lobenhoffer J."/>
            <person name="Suzuki-Yamamoto T."/>
            <person name="Kimoto M."/>
            <person name="Rubets E."/>
            <person name="Chau S."/>
            <person name="Chen Y."/>
            <person name="Hu X."/>
            <person name="Bernhardt N."/>
            <person name="Spieth P.M."/>
            <person name="Weiss N."/>
            <person name="Bornstein S.R."/>
            <person name="Mukhopadhyay D."/>
            <person name="Bode-Boeger S.M."/>
            <person name="Maas R."/>
            <person name="Wang Y."/>
            <person name="Macchiarulo A."/>
            <person name="Mangoni A.A."/>
            <person name="Cellini B."/>
            <person name="Rodionov R.N."/>
        </authorList>
    </citation>
    <scope>FUNCTION</scope>
</reference>
<reference key="14">
    <citation type="journal article" date="2007" name="Nat. Med.">
        <title>Disruption of methylarginine metabolism impairs vascular homeostasis.</title>
        <authorList>
            <person name="Leiper J."/>
            <person name="Nandi M."/>
            <person name="Torondel B."/>
            <person name="Murray-Rust J."/>
            <person name="Malaki M."/>
            <person name="O'Hara B."/>
            <person name="Rossiter S."/>
            <person name="Anthony S."/>
            <person name="Madhani M."/>
            <person name="Selwood D."/>
            <person name="Smith C."/>
            <person name="Wojciak-Stothard B."/>
            <person name="Rudiger A."/>
            <person name="Stidwill R."/>
            <person name="McDonald N.Q."/>
            <person name="Vallance P."/>
        </authorList>
    </citation>
    <scope>X-RAY CRYSTALLOGRAPHY (2.0 ANGSTROMS) OF 2-284 IN COMPLEXES WITH CITRULLINE AND INHIBITOR L-257</scope>
</reference>
<reference key="15">
    <citation type="journal article" date="2009" name="Biochemistry">
        <title>Developing dual and specific inhibitors of dimethylarginine dimethylaminohydrolase-1 and nitric oxide synthase: toward a targeted polypharmacology to control nitric oxide.</title>
        <authorList>
            <person name="Wang Y."/>
            <person name="Monzingo A.F."/>
            <person name="Hu S."/>
            <person name="Schaller T.H."/>
            <person name="Robertus J.D."/>
            <person name="Fast W."/>
        </authorList>
    </citation>
    <scope>X-RAY CRYSTALLOGRAPHY (1.9 ANGSTROMS) IN COMPLEX WITH N-1-IMINOPROPYL-L-ORNITHINE</scope>
    <scope>CATALYTIC ACTIVITY</scope>
    <scope>ZINC-BINDING</scope>
    <scope>ACTIVITY REGULATION</scope>
    <scope>SUBUNIT</scope>
    <scope>BIOPHYSICOCHEMICAL PROPERTIES</scope>
    <scope>ACTIVE SITE</scope>
    <scope>MUTAGENESIS OF LEU-30; GLU-78 AND LEU-271</scope>
    <scope>IDENTIFICATION BY MASS SPECTROMETRY</scope>
    <scope>FUNCTION</scope>
</reference>